<proteinExistence type="evidence at protein level"/>
<sequence>MEEIADKTFFRYCLLTLIFAGPPTAVLLKFLQAPYGKHNRTGWGPTVSPPIAWFVMESPTLWLTLLLFPFGRHALNPKSLLLFSPYLIHYFHRTIIYPLRLFRSSFPAGKNGFPITIAALAFTFNLLNGYIQARWVSHYKDDYEDGNWFWWRFVIGMVVFITGMYINITSDRTLVRLKKENRGGYVIPRGGWFELVSCPNYFGEAIEWLGWAVMTWSWAGIGFFLYTCSNLFPRARASHKWYIAKFKEEYPKTRKAVIPFVY</sequence>
<reference key="1">
    <citation type="journal article" date="1996" name="Science">
        <title>A role for brassinosteroids in light-dependent development of Arabidopsis.</title>
        <authorList>
            <person name="Li J."/>
            <person name="Nagpal P."/>
            <person name="Vitart V."/>
            <person name="McMorris T.C."/>
            <person name="Chory J."/>
        </authorList>
    </citation>
    <scope>NUCLEOTIDE SEQUENCE [MRNA]</scope>
    <scope>FUNCTION</scope>
    <scope>DISRUPTION PHENOTYPE</scope>
    <source>
        <strain>cv. Columbia</strain>
    </source>
</reference>
<reference key="2">
    <citation type="journal article" date="1999" name="Nature">
        <title>Sequence and analysis of chromosome 2 of the plant Arabidopsis thaliana.</title>
        <authorList>
            <person name="Lin X."/>
            <person name="Kaul S."/>
            <person name="Rounsley S.D."/>
            <person name="Shea T.P."/>
            <person name="Benito M.-I."/>
            <person name="Town C.D."/>
            <person name="Fujii C.Y."/>
            <person name="Mason T.M."/>
            <person name="Bowman C.L."/>
            <person name="Barnstead M.E."/>
            <person name="Feldblyum T.V."/>
            <person name="Buell C.R."/>
            <person name="Ketchum K.A."/>
            <person name="Lee J.J."/>
            <person name="Ronning C.M."/>
            <person name="Koo H.L."/>
            <person name="Moffat K.S."/>
            <person name="Cronin L.A."/>
            <person name="Shen M."/>
            <person name="Pai G."/>
            <person name="Van Aken S."/>
            <person name="Umayam L."/>
            <person name="Tallon L.J."/>
            <person name="Gill J.E."/>
            <person name="Adams M.D."/>
            <person name="Carrera A.J."/>
            <person name="Creasy T.H."/>
            <person name="Goodman H.M."/>
            <person name="Somerville C.R."/>
            <person name="Copenhaver G.P."/>
            <person name="Preuss D."/>
            <person name="Nierman W.C."/>
            <person name="White O."/>
            <person name="Eisen J.A."/>
            <person name="Salzberg S.L."/>
            <person name="Fraser C.M."/>
            <person name="Venter J.C."/>
        </authorList>
    </citation>
    <scope>NUCLEOTIDE SEQUENCE [LARGE SCALE GENOMIC DNA]</scope>
    <source>
        <strain>cv. Columbia</strain>
    </source>
</reference>
<reference key="3">
    <citation type="journal article" date="2017" name="Plant J.">
        <title>Araport11: a complete reannotation of the Arabidopsis thaliana reference genome.</title>
        <authorList>
            <person name="Cheng C.Y."/>
            <person name="Krishnakumar V."/>
            <person name="Chan A.P."/>
            <person name="Thibaud-Nissen F."/>
            <person name="Schobel S."/>
            <person name="Town C.D."/>
        </authorList>
    </citation>
    <scope>GENOME REANNOTATION</scope>
    <source>
        <strain>cv. Columbia</strain>
    </source>
</reference>
<reference key="4">
    <citation type="journal article" date="2003" name="Science">
        <title>Empirical analysis of transcriptional activity in the Arabidopsis genome.</title>
        <authorList>
            <person name="Yamada K."/>
            <person name="Lim J."/>
            <person name="Dale J.M."/>
            <person name="Chen H."/>
            <person name="Shinn P."/>
            <person name="Palm C.J."/>
            <person name="Southwick A.M."/>
            <person name="Wu H.C."/>
            <person name="Kim C.J."/>
            <person name="Nguyen M."/>
            <person name="Pham P.K."/>
            <person name="Cheuk R.F."/>
            <person name="Karlin-Newmann G."/>
            <person name="Liu S.X."/>
            <person name="Lam B."/>
            <person name="Sakano H."/>
            <person name="Wu T."/>
            <person name="Yu G."/>
            <person name="Miranda M."/>
            <person name="Quach H.L."/>
            <person name="Tripp M."/>
            <person name="Chang C.H."/>
            <person name="Lee J.M."/>
            <person name="Toriumi M.J."/>
            <person name="Chan M.M."/>
            <person name="Tang C.C."/>
            <person name="Onodera C.S."/>
            <person name="Deng J.M."/>
            <person name="Akiyama K."/>
            <person name="Ansari Y."/>
            <person name="Arakawa T."/>
            <person name="Banh J."/>
            <person name="Banno F."/>
            <person name="Bowser L."/>
            <person name="Brooks S.Y."/>
            <person name="Carninci P."/>
            <person name="Chao Q."/>
            <person name="Choy N."/>
            <person name="Enju A."/>
            <person name="Goldsmith A.D."/>
            <person name="Gurjal M."/>
            <person name="Hansen N.F."/>
            <person name="Hayashizaki Y."/>
            <person name="Johnson-Hopson C."/>
            <person name="Hsuan V.W."/>
            <person name="Iida K."/>
            <person name="Karnes M."/>
            <person name="Khan S."/>
            <person name="Koesema E."/>
            <person name="Ishida J."/>
            <person name="Jiang P.X."/>
            <person name="Jones T."/>
            <person name="Kawai J."/>
            <person name="Kamiya A."/>
            <person name="Meyers C."/>
            <person name="Nakajima M."/>
            <person name="Narusaka M."/>
            <person name="Seki M."/>
            <person name="Sakurai T."/>
            <person name="Satou M."/>
            <person name="Tamse R."/>
            <person name="Vaysberg M."/>
            <person name="Wallender E.K."/>
            <person name="Wong C."/>
            <person name="Yamamura Y."/>
            <person name="Yuan S."/>
            <person name="Shinozaki K."/>
            <person name="Davis R.W."/>
            <person name="Theologis A."/>
            <person name="Ecker J.R."/>
        </authorList>
    </citation>
    <scope>NUCLEOTIDE SEQUENCE [LARGE SCALE MRNA]</scope>
    <source>
        <strain>cv. Columbia</strain>
    </source>
</reference>
<reference key="5">
    <citation type="journal article" date="1997" name="Plant Cell">
        <title>The Arabidopsis deetiolated2 mutant is blocked early in brassinosteroid biosynthesis.</title>
        <authorList>
            <person name="Fujioka S."/>
            <person name="Li J."/>
            <person name="Choi Y.-H."/>
            <person name="Seto H."/>
            <person name="Takatsuto S."/>
            <person name="Noguchi T."/>
            <person name="Watanabe T."/>
            <person name="Kuriyama H."/>
            <person name="Yokota T."/>
            <person name="Chory J."/>
            <person name="Sakurai A."/>
        </authorList>
    </citation>
    <scope>FUNCTION</scope>
    <scope>DISRUPTION PHENOTYPE</scope>
    <scope>MUTAGENESIS OF GLU-204</scope>
    <source>
        <strain>cv. Columbia</strain>
    </source>
</reference>
<reference key="6">
    <citation type="journal article" date="1997" name="Proc. Natl. Acad. Sci. U.S.A.">
        <title>Conservation of function between mammalian and plant steroid 5alpha-reductases.</title>
        <authorList>
            <person name="Li J."/>
            <person name="Biswas M.G."/>
            <person name="Chao A."/>
            <person name="Russell D.W."/>
            <person name="Chory J."/>
        </authorList>
    </citation>
    <scope>FUNCTION</scope>
    <scope>MUTAGENESIS OF GLU-204</scope>
    <scope>CATALYTIC ACTIVITY</scope>
    <scope>BIOPHYSICOCHEMICAL PROPERTIES</scope>
    <scope>ACTIVITY REGULATION</scope>
    <source>
        <strain>cv. Columbia</strain>
    </source>
</reference>
<reference key="7">
    <citation type="journal article" date="1999" name="Mol. Gen. Genet.">
        <title>Genetic analysis of leaf form mutants from the Arabidopsis information service collection.</title>
        <authorList>
            <person name="Serrano-Cartagena J."/>
            <person name="Robles P."/>
            <person name="Ponce M.R."/>
            <person name="Micol J.L."/>
        </authorList>
    </citation>
    <scope>DISRUPTION PHENOTYPE</scope>
    <scope>MUTAGENESIS OF GLU-204</scope>
</reference>
<reference key="8">
    <citation type="journal article" date="1999" name="Plant Physiol.">
        <title>Arabidopsis det2 is defective in the conversion of (24R)-24-methylcholest-4-en-3-one to (24R)-24-methyl-5alpha-cholestan-3-one in brassinosteroid biosynthesis.</title>
        <authorList>
            <person name="Noguchi T."/>
            <person name="Fujioka S."/>
            <person name="Takatsuto S."/>
            <person name="Sakurai A."/>
            <person name="Yoshida S."/>
            <person name="Li J."/>
            <person name="Chory J."/>
        </authorList>
    </citation>
    <scope>FUNCTION</scope>
    <scope>MUTAGENESIS OF GLU-204</scope>
    <scope>CATALYTIC ACTIVITY</scope>
    <source>
        <strain>cv. Columbia</strain>
    </source>
</reference>
<reference key="9">
    <citation type="journal article" date="2001" name="Plant Physiol.">
        <title>A role for brassinosteroids in germination in Arabidopsis.</title>
        <authorList>
            <person name="Steber C.M."/>
            <person name="McCourt P."/>
        </authorList>
    </citation>
    <scope>MUTAGENESIS OF GLU-204</scope>
</reference>
<reference key="10">
    <citation type="journal article" date="2002" name="Plant Cell Physiol.">
        <title>Brassinosteroids control the proliferation of leaf cells of Arabidopsis thaliana.</title>
        <authorList>
            <person name="Nakaya M."/>
            <person name="Tsukaya H."/>
            <person name="Murakami N."/>
            <person name="Kato M."/>
        </authorList>
    </citation>
    <scope>FUNCTION</scope>
    <scope>DISRUPTION PHENOTYPE</scope>
    <source>
        <strain>cv. Columbia</strain>
    </source>
</reference>
<reference key="11">
    <citation type="journal article" date="2005" name="J. Steroid Biochem. Mol. Biol.">
        <title>5alpha-Reductase activity in Lycopersicon esculentum: cloning and functional characterization of LeDET2 and evidence of the presence of two isoenzymes.</title>
        <authorList>
            <person name="Rosati F."/>
            <person name="Bardazzi I."/>
            <person name="De Blasi P."/>
            <person name="Simi L."/>
            <person name="Scarpi D."/>
            <person name="Guarna A."/>
            <person name="Serio M."/>
            <person name="Racchi M.L."/>
            <person name="Danza G."/>
        </authorList>
    </citation>
    <scope>FUNCTION</scope>
    <scope>CATALYTIC ACTIVITY</scope>
    <scope>MUTAGENESIS OF GLU-204</scope>
    <source>
        <strain>cv. Columbia</strain>
    </source>
</reference>
<reference key="12">
    <citation type="journal article" date="2012" name="J. Biol. Chem.">
        <title>CYP90A1/CPD, a brassinosteroid biosynthetic cytochrome P450 of Arabidopsis, catalyzes C-3 oxidation.</title>
        <authorList>
            <person name="Ohnishi T."/>
            <person name="Godza B."/>
            <person name="Watanabe B."/>
            <person name="Fujioka S."/>
            <person name="Hategan L."/>
            <person name="Ide K."/>
            <person name="Shibata K."/>
            <person name="Yokota T."/>
            <person name="Szekeres M."/>
            <person name="Mizutani M."/>
        </authorList>
    </citation>
    <scope>FUNCTION</scope>
    <scope>BIOPHYSICOCHEMICAL PROPERTIES</scope>
    <scope>CATALYTIC ACTIVITY</scope>
    <scope>PATHWAY</scope>
    <source>
        <strain>cv. Columbia</strain>
    </source>
</reference>
<reference key="13">
    <citation type="journal article" date="2013" name="Plant Physiol.">
        <title>Brassinosteroid regulates seed size and shape in Arabidopsis.</title>
        <authorList>
            <person name="Jiang W.B."/>
            <person name="Huang H.Y."/>
            <person name="Hu Y.W."/>
            <person name="Zhu S.W."/>
            <person name="Wang Z.Y."/>
            <person name="Lin W.H."/>
        </authorList>
    </citation>
    <scope>FUNCTION</scope>
    <scope>DISRUPTION PHENOTYPE</scope>
    <source>
        <strain>cv. Columbia</strain>
    </source>
</reference>
<accession>Q38944</accession>
<accession>Q9SH83</accession>
<keyword id="KW-1069">Brassinosteroid biosynthesis</keyword>
<keyword id="KW-0444">Lipid biosynthesis</keyword>
<keyword id="KW-0443">Lipid metabolism</keyword>
<keyword id="KW-0472">Membrane</keyword>
<keyword id="KW-0521">NADP</keyword>
<keyword id="KW-0560">Oxidoreductase</keyword>
<keyword id="KW-1185">Reference proteome</keyword>
<keyword id="KW-0752">Steroid biosynthesis</keyword>
<keyword id="KW-0812">Transmembrane</keyword>
<keyword id="KW-1133">Transmembrane helix</keyword>
<organism>
    <name type="scientific">Arabidopsis thaliana</name>
    <name type="common">Mouse-ear cress</name>
    <dbReference type="NCBI Taxonomy" id="3702"/>
    <lineage>
        <taxon>Eukaryota</taxon>
        <taxon>Viridiplantae</taxon>
        <taxon>Streptophyta</taxon>
        <taxon>Embryophyta</taxon>
        <taxon>Tracheophyta</taxon>
        <taxon>Spermatophyta</taxon>
        <taxon>Magnoliopsida</taxon>
        <taxon>eudicotyledons</taxon>
        <taxon>Gunneridae</taxon>
        <taxon>Pentapetalae</taxon>
        <taxon>rosids</taxon>
        <taxon>malvids</taxon>
        <taxon>Brassicales</taxon>
        <taxon>Brassicaceae</taxon>
        <taxon>Camelineae</taxon>
        <taxon>Arabidopsis</taxon>
    </lineage>
</organism>
<comment type="function">
    <text evidence="3 5 6 7 8 9 10 11">Involved in a reduction step in the biosynthesis of the plant steroid, brassinolide (BL); acts at the second step in brassinolide biosynthesis in the 5alpha-reduction of (24R)- 24-methylcholest-4-en-3-one, which is further modified to form campestanol. Can use progesterone, testosterone, androstenedione and campestenone as substrate. Also catalyzes the conversion of campest-4-en-3-one (campesta-4-en-3-one, 4-en-3-one) to campest-3-one (campesta-3-one, 3-one), of (22S,24R)-22-hydroxyergost-4-en-3-one (22-hydroxy-campesta-4-en-3-one, 22-OH-4-en-3-one) to (22S,24R)-22-hydroxy-5alpha-ergostan-3-one (22-hydroxy-campesta-3-one, 22-OH-3-one), and of (22R,23R)-22,23-dihydroxy-5alpha-campestan-3-one (22,23,diOH-4-en-3-one) to (22R,23R)-22,23-dihydroxycampest-4-en-3-one (6-deoxo3DT) (PubMed:22822057). Required for the brassinosteroid- (BR) dependent regulation of seed size and shape as well as embryo development (PubMed:23771896).</text>
</comment>
<comment type="catalytic activity">
    <reaction evidence="3 6 10">
        <text>a 3-oxo-5alpha-steroid + NADP(+) = a 3-oxo-Delta(4)-steroid + NADPH + H(+)</text>
        <dbReference type="Rhea" id="RHEA:54384"/>
        <dbReference type="ChEBI" id="CHEBI:13601"/>
        <dbReference type="ChEBI" id="CHEBI:15378"/>
        <dbReference type="ChEBI" id="CHEBI:47909"/>
        <dbReference type="ChEBI" id="CHEBI:57783"/>
        <dbReference type="ChEBI" id="CHEBI:58349"/>
        <dbReference type="EC" id="1.3.1.22"/>
    </reaction>
</comment>
<comment type="catalytic activity">
    <reaction evidence="7">
        <text>5alpha-campestan-3-one + NADP(+) = campest-4-en-3-one + NADPH + H(+)</text>
        <dbReference type="Rhea" id="RHEA:54416"/>
        <dbReference type="ChEBI" id="CHEBI:15378"/>
        <dbReference type="ChEBI" id="CHEBI:18533"/>
        <dbReference type="ChEBI" id="CHEBI:18534"/>
        <dbReference type="ChEBI" id="CHEBI:57783"/>
        <dbReference type="ChEBI" id="CHEBI:58349"/>
    </reaction>
    <physiologicalReaction direction="right-to-left" evidence="7">
        <dbReference type="Rhea" id="RHEA:54418"/>
    </physiologicalReaction>
</comment>
<comment type="catalytic activity">
    <reaction evidence="7">
        <text>(22S,24R)-22-hydroxy-5alpha-ergostan-3-one + NADP(+) = (22S)-22-hydroxycampest-4-en-3-one + NADPH + H(+)</text>
        <dbReference type="Rhea" id="RHEA:69987"/>
        <dbReference type="ChEBI" id="CHEBI:15378"/>
        <dbReference type="ChEBI" id="CHEBI:57783"/>
        <dbReference type="ChEBI" id="CHEBI:58349"/>
        <dbReference type="ChEBI" id="CHEBI:59411"/>
        <dbReference type="ChEBI" id="CHEBI:72330"/>
    </reaction>
    <physiologicalReaction direction="right-to-left" evidence="7">
        <dbReference type="Rhea" id="RHEA:69989"/>
    </physiologicalReaction>
</comment>
<comment type="catalytic activity">
    <reaction evidence="7">
        <text>3-dehydro-6-deoxoteasterone + NADP(+) = (22R,23R)-22,23-dihydroxycampest-4-en-3-one + NADPH + H(+)</text>
        <dbReference type="Rhea" id="RHEA:69991"/>
        <dbReference type="ChEBI" id="CHEBI:15378"/>
        <dbReference type="ChEBI" id="CHEBI:20710"/>
        <dbReference type="ChEBI" id="CHEBI:57783"/>
        <dbReference type="ChEBI" id="CHEBI:58349"/>
        <dbReference type="ChEBI" id="CHEBI:80402"/>
    </reaction>
    <physiologicalReaction direction="left-to-right" evidence="7">
        <dbReference type="Rhea" id="RHEA:69992"/>
    </physiologicalReaction>
</comment>
<comment type="activity regulation">
    <text evidence="10">Inhibited by the 4-azasteroids 4-MA.</text>
</comment>
<comment type="biophysicochemical properties">
    <kinetics>
        <KM evidence="7">15.3 uM for campest-4-en-3-one</KM>
        <KM evidence="7">3.9 uM for (22S,24R)-22-hydroxyergost-4-en-3-one</KM>
        <KM evidence="7">8.5 uM for cholest-4-en-3-one</KM>
        <KM evidence="7">3 uM for (22R,23R)-22,23-dihydroxy-campest-4-en-3-one</KM>
        <KM evidence="10">2.5 uM for testosterone</KM>
        <KM evidence="10">0.4 uM for progesterone</KM>
        <Vmax evidence="7">1.4 umol/min/mg enzyme with campest-4-en-3-one as substrate</Vmax>
        <Vmax evidence="7">0.85 umol/min/mg enzyme with (22S,24R)-22-hydroxyergost-4-en-3-one as substrate</Vmax>
        <Vmax evidence="7">1.02 umol/min/mg enzyme with cholest-4-en-3-one as substrate</Vmax>
        <Vmax evidence="7">0.64 umol/min/mg enzyme with (22R,23R)-22,23-dihydroxy-campest-4-en-3-one as substrate</Vmax>
        <Vmax evidence="10">0.2 nmol/min/mg enzyme with testosterone as substrate</Vmax>
        <Vmax evidence="10">0.5 nmol/min/mg enzyme with progesterone as substrate</Vmax>
    </kinetics>
    <phDependence>
        <text evidence="10">Optimum pH is 6.8.</text>
    </phDependence>
</comment>
<comment type="pathway">
    <text evidence="7">Plant hormone biosynthesis; brassinosteroid biosynthesis.</text>
</comment>
<comment type="subcellular location">
    <subcellularLocation>
        <location evidence="1">Membrane</location>
        <topology evidence="1">Multi-pass membrane protein</topology>
    </subcellularLocation>
</comment>
<comment type="disruption phenotype">
    <text evidence="2 5 7 9 11">Brassinolide-reversible dark- and light-grown defects; small dark-green dwarf plants with a limited leaves expension due to a reduced number of cells per leaf blade (PubMed:10394910, PubMed:11867704, PubMed:8602526, PubMed:9401120). Small and less elongated seeds due to a decreased seed cavity, reduced endosperm volume and integument cell length (PubMed:22822057). Delay embryo development, with a reduction in both the size and number of embryo cells (PubMed:22822057).</text>
</comment>
<comment type="similarity">
    <text evidence="17">Belongs to the steroid 5-alpha reductase family.</text>
</comment>
<dbReference type="EC" id="1.3.1.22" evidence="3 6 10 7"/>
<dbReference type="EC" id="1.3.1.-" evidence="7"/>
<dbReference type="EMBL" id="U53860">
    <property type="protein sequence ID" value="AAC49264.1"/>
    <property type="molecule type" value="mRNA"/>
</dbReference>
<dbReference type="EMBL" id="CP002685">
    <property type="protein sequence ID" value="AEC09484.1"/>
    <property type="molecule type" value="Genomic_DNA"/>
</dbReference>
<dbReference type="EMBL" id="AY045926">
    <property type="protein sequence ID" value="AAK76600.1"/>
    <property type="molecule type" value="mRNA"/>
</dbReference>
<dbReference type="EMBL" id="AY079337">
    <property type="protein sequence ID" value="AAL85068.1"/>
    <property type="molecule type" value="mRNA"/>
</dbReference>
<dbReference type="PIR" id="C84800">
    <property type="entry name" value="C84800"/>
</dbReference>
<dbReference type="RefSeq" id="NP_181340.1">
    <property type="nucleotide sequence ID" value="NM_129361.5"/>
</dbReference>
<dbReference type="SMR" id="Q38944"/>
<dbReference type="BioGRID" id="3727">
    <property type="interactions" value="2"/>
</dbReference>
<dbReference type="FunCoup" id="Q38944">
    <property type="interactions" value="514"/>
</dbReference>
<dbReference type="IntAct" id="Q38944">
    <property type="interactions" value="2"/>
</dbReference>
<dbReference type="STRING" id="3702.Q38944"/>
<dbReference type="GlyGen" id="Q38944">
    <property type="glycosylation" value="1 site"/>
</dbReference>
<dbReference type="PaxDb" id="3702-AT2G38050.1"/>
<dbReference type="ProteomicsDB" id="224655"/>
<dbReference type="EnsemblPlants" id="AT2G38050.1">
    <property type="protein sequence ID" value="AT2G38050.1"/>
    <property type="gene ID" value="AT2G38050"/>
</dbReference>
<dbReference type="GeneID" id="818383"/>
<dbReference type="Gramene" id="AT2G38050.1">
    <property type="protein sequence ID" value="AT2G38050.1"/>
    <property type="gene ID" value="AT2G38050"/>
</dbReference>
<dbReference type="KEGG" id="ath:AT2G38050"/>
<dbReference type="Araport" id="AT2G38050"/>
<dbReference type="TAIR" id="AT2G38050">
    <property type="gene designation" value="DET2"/>
</dbReference>
<dbReference type="eggNOG" id="KOG1638">
    <property type="taxonomic scope" value="Eukaryota"/>
</dbReference>
<dbReference type="HOGENOM" id="CLU_065395_1_0_1"/>
<dbReference type="InParanoid" id="Q38944"/>
<dbReference type="OMA" id="PHYALEW"/>
<dbReference type="OrthoDB" id="5788137at2759"/>
<dbReference type="PhylomeDB" id="Q38944"/>
<dbReference type="BioCyc" id="ARA:AT2G38050-MONOMER"/>
<dbReference type="BioCyc" id="MetaCyc:AT2G38050-MONOMER"/>
<dbReference type="SABIO-RK" id="Q38944"/>
<dbReference type="UniPathway" id="UPA00381"/>
<dbReference type="PRO" id="PR:Q38944"/>
<dbReference type="Proteomes" id="UP000006548">
    <property type="component" value="Chromosome 2"/>
</dbReference>
<dbReference type="ExpressionAtlas" id="Q38944">
    <property type="expression patterns" value="baseline and differential"/>
</dbReference>
<dbReference type="GO" id="GO:0016020">
    <property type="term" value="C:membrane"/>
    <property type="evidence" value="ECO:0007669"/>
    <property type="project" value="UniProtKB-SubCell"/>
</dbReference>
<dbReference type="GO" id="GO:0047751">
    <property type="term" value="F:3-oxo-5-alpha-steroid 4-dehydrogenase (NADP+) activity"/>
    <property type="evidence" value="ECO:0000314"/>
    <property type="project" value="UniProtKB"/>
</dbReference>
<dbReference type="GO" id="GO:0016132">
    <property type="term" value="P:brassinosteroid biosynthetic process"/>
    <property type="evidence" value="ECO:0000314"/>
    <property type="project" value="TAIR"/>
</dbReference>
<dbReference type="GO" id="GO:0010268">
    <property type="term" value="P:brassinosteroid homeostasis"/>
    <property type="evidence" value="ECO:0000270"/>
    <property type="project" value="TAIR"/>
</dbReference>
<dbReference type="FunFam" id="1.20.120.1630:FF:000002">
    <property type="entry name" value="Steroid 5 alpha-reductase 1"/>
    <property type="match status" value="1"/>
</dbReference>
<dbReference type="Gene3D" id="1.20.120.1630">
    <property type="match status" value="1"/>
</dbReference>
<dbReference type="InterPro" id="IPR016636">
    <property type="entry name" value="3-oxo-5-alpha-steroid_4-DH"/>
</dbReference>
<dbReference type="InterPro" id="IPR001104">
    <property type="entry name" value="3-oxo-5_a-steroid_4-DH_C"/>
</dbReference>
<dbReference type="InterPro" id="IPR039357">
    <property type="entry name" value="SRD5A/TECR"/>
</dbReference>
<dbReference type="PANTHER" id="PTHR10556">
    <property type="entry name" value="3-OXO-5-ALPHA-STEROID 4-DEHYDROGENASE"/>
    <property type="match status" value="1"/>
</dbReference>
<dbReference type="PANTHER" id="PTHR10556:SF43">
    <property type="entry name" value="STEROID 5-ALPHA-REDUCTASE DET2"/>
    <property type="match status" value="1"/>
</dbReference>
<dbReference type="Pfam" id="PF02544">
    <property type="entry name" value="Steroid_dh"/>
    <property type="match status" value="1"/>
</dbReference>
<dbReference type="PIRSF" id="PIRSF015596">
    <property type="entry name" value="5_alpha-SR2"/>
    <property type="match status" value="1"/>
</dbReference>
<dbReference type="PROSITE" id="PS50244">
    <property type="entry name" value="S5A_REDUCTASE"/>
    <property type="match status" value="1"/>
</dbReference>
<gene>
    <name evidence="14 15 16" type="primary">DET2</name>
    <name evidence="12" type="synonym">CRO1</name>
    <name evidence="18" type="ordered locus">At2g38050</name>
    <name evidence="17" type="ORF">T8P21.4</name>
</gene>
<name>DET2_ARATH</name>
<evidence type="ECO:0000255" key="1"/>
<evidence type="ECO:0000269" key="2">
    <source>
    </source>
</evidence>
<evidence type="ECO:0000269" key="3">
    <source>
    </source>
</evidence>
<evidence type="ECO:0000269" key="4">
    <source>
    </source>
</evidence>
<evidence type="ECO:0000269" key="5">
    <source>
    </source>
</evidence>
<evidence type="ECO:0000269" key="6">
    <source>
    </source>
</evidence>
<evidence type="ECO:0000269" key="7">
    <source>
    </source>
</evidence>
<evidence type="ECO:0000269" key="8">
    <source>
    </source>
</evidence>
<evidence type="ECO:0000269" key="9">
    <source>
    </source>
</evidence>
<evidence type="ECO:0000269" key="10">
    <source>
    </source>
</evidence>
<evidence type="ECO:0000269" key="11">
    <source>
    </source>
</evidence>
<evidence type="ECO:0000303" key="12">
    <source>
    </source>
</evidence>
<evidence type="ECO:0000303" key="13">
    <source>
    </source>
</evidence>
<evidence type="ECO:0000303" key="14">
    <source>
    </source>
</evidence>
<evidence type="ECO:0000303" key="15">
    <source>
    </source>
</evidence>
<evidence type="ECO:0000303" key="16">
    <source>
    </source>
</evidence>
<evidence type="ECO:0000305" key="17"/>
<evidence type="ECO:0000312" key="18">
    <source>
        <dbReference type="Araport" id="AT2G38050"/>
    </source>
</evidence>
<feature type="chain" id="PRO_0000213681" description="Steroid 5-alpha-reductase DET2">
    <location>
        <begin position="1"/>
        <end position="262"/>
    </location>
</feature>
<feature type="transmembrane region" description="Helical" evidence="1">
    <location>
        <begin position="13"/>
        <end position="33"/>
    </location>
</feature>
<feature type="transmembrane region" description="Helical" evidence="1">
    <location>
        <begin position="51"/>
        <end position="71"/>
    </location>
</feature>
<feature type="transmembrane region" description="Helical" evidence="1">
    <location>
        <begin position="79"/>
        <end position="99"/>
    </location>
</feature>
<feature type="transmembrane region" description="Helical" evidence="1">
    <location>
        <begin position="113"/>
        <end position="133"/>
    </location>
</feature>
<feature type="transmembrane region" description="Helical" evidence="1">
    <location>
        <begin position="148"/>
        <end position="168"/>
    </location>
</feature>
<feature type="transmembrane region" description="Helical" evidence="1">
    <location>
        <begin position="205"/>
        <end position="225"/>
    </location>
</feature>
<feature type="mutagenesis site" description="In cro1-2 and det2-1; loss of activity, enhanced sensitivity to abscisic acid (ABA) during seed germination." evidence="2 3 4 6 10 11">
    <original>E</original>
    <variation>K</variation>
    <location>
        <position position="204"/>
    </location>
</feature>
<feature type="sequence conflict" description="In Ref. 1; AAC49264." evidence="17" ref="1">
    <original>C</original>
    <variation>R</variation>
    <location>
        <position position="198"/>
    </location>
</feature>
<protein>
    <recommendedName>
        <fullName evidence="14">Steroid 5-alpha-reductase DET2</fullName>
        <ecNumber evidence="3 6 10">1.3.1.22</ecNumber>
    </recommendedName>
    <alternativeName>
        <fullName evidence="13">(22R,23R)-22,23-dihydroxycampest-4-en-3-one synthase</fullName>
        <ecNumber evidence="7">1.3.1.-</ecNumber>
    </alternativeName>
    <alternativeName>
        <fullName evidence="13">(22S,24R)-22-hydroxy-5alpha-ergostan-3-one synthase</fullName>
        <ecNumber evidence="7">1.3.1.22</ecNumber>
    </alternativeName>
    <alternativeName>
        <fullName evidence="13">Campest-3-one synthase</fullName>
        <ecNumber evidence="7">1.3.1.22</ecNumber>
    </alternativeName>
    <alternativeName>
        <fullName evidence="12">Protein COMPACT ROSETTE 1</fullName>
    </alternativeName>
    <alternativeName>
        <fullName evidence="14 15 16">Protein DEETIOLATED 2</fullName>
        <shortName evidence="14 15 16">AtDET2</shortName>
    </alternativeName>
</protein>